<sequence>MSELTVVAQPYAKAAFDYARDVECLDDWQQMFAITQVVLEQPNTLLVLNDLDEDGSEQPLLDLILHAGGEWLNKNFENFLRIMEENKRLKALSEVNVQFQEMKADYERTMTVTVRVSEPLDEEQMARLKQALTEKYGKAITLETQLDPSLVGGVVITAGQTVYDGSVLTNLSRLATNLHV</sequence>
<organism>
    <name type="scientific">Vibrio campbellii (strain ATCC BAA-1116)</name>
    <dbReference type="NCBI Taxonomy" id="2902295"/>
    <lineage>
        <taxon>Bacteria</taxon>
        <taxon>Pseudomonadati</taxon>
        <taxon>Pseudomonadota</taxon>
        <taxon>Gammaproteobacteria</taxon>
        <taxon>Vibrionales</taxon>
        <taxon>Vibrionaceae</taxon>
        <taxon>Vibrio</taxon>
    </lineage>
</organism>
<accession>A7N6Q7</accession>
<evidence type="ECO:0000255" key="1">
    <source>
        <dbReference type="HAMAP-Rule" id="MF_01416"/>
    </source>
</evidence>
<name>ATPD2_VIBC1</name>
<gene>
    <name evidence="1" type="primary">atpH2</name>
    <name type="ordered locus">VIBHAR_06107</name>
</gene>
<keyword id="KW-0066">ATP synthesis</keyword>
<keyword id="KW-0997">Cell inner membrane</keyword>
<keyword id="KW-1003">Cell membrane</keyword>
<keyword id="KW-0139">CF(1)</keyword>
<keyword id="KW-0375">Hydrogen ion transport</keyword>
<keyword id="KW-0406">Ion transport</keyword>
<keyword id="KW-0472">Membrane</keyword>
<keyword id="KW-0813">Transport</keyword>
<protein>
    <recommendedName>
        <fullName evidence="1">ATP synthase subunit delta 2</fullName>
    </recommendedName>
    <alternativeName>
        <fullName evidence="1">ATP synthase F(1) sector subunit delta 2</fullName>
    </alternativeName>
    <alternativeName>
        <fullName evidence="1">F-type ATPase subunit delta 2</fullName>
        <shortName evidence="1">F-ATPase subunit delta 2</shortName>
    </alternativeName>
</protein>
<comment type="function">
    <text evidence="1">F(1)F(0) ATP synthase produces ATP from ADP in the presence of a proton or sodium gradient. F-type ATPases consist of two structural domains, F(1) containing the extramembraneous catalytic core and F(0) containing the membrane proton channel, linked together by a central stalk and a peripheral stalk. During catalysis, ATP synthesis in the catalytic domain of F(1) is coupled via a rotary mechanism of the central stalk subunits to proton translocation.</text>
</comment>
<comment type="function">
    <text evidence="1">This protein is part of the stalk that links CF(0) to CF(1). It either transmits conformational changes from CF(0) to CF(1) or is implicated in proton conduction.</text>
</comment>
<comment type="subunit">
    <text evidence="1">F-type ATPases have 2 components, F(1) - the catalytic core - and F(0) - the membrane proton channel. F(1) has five subunits: alpha(3), beta(3), gamma(1), delta(1), epsilon(1). F(0) has three main subunits: a(1), b(2) and c(10-14). The alpha and beta chains form an alternating ring which encloses part of the gamma chain. F(1) is attached to F(0) by a central stalk formed by the gamma and epsilon chains, while a peripheral stalk is formed by the delta and b chains.</text>
</comment>
<comment type="subcellular location">
    <subcellularLocation>
        <location evidence="1">Cell inner membrane</location>
        <topology evidence="1">Peripheral membrane protein</topology>
    </subcellularLocation>
</comment>
<comment type="similarity">
    <text evidence="1">Belongs to the ATPase delta chain family.</text>
</comment>
<feature type="chain" id="PRO_0000382168" description="ATP synthase subunit delta 2">
    <location>
        <begin position="1"/>
        <end position="180"/>
    </location>
</feature>
<dbReference type="EMBL" id="CP000790">
    <property type="protein sequence ID" value="ABU74000.1"/>
    <property type="molecule type" value="Genomic_DNA"/>
</dbReference>
<dbReference type="RefSeq" id="WP_012129609.1">
    <property type="nucleotide sequence ID" value="NC_009784.1"/>
</dbReference>
<dbReference type="SMR" id="A7N6Q7"/>
<dbReference type="KEGG" id="vha:VIBHAR_06107"/>
<dbReference type="PATRIC" id="fig|338187.25.peg.4217"/>
<dbReference type="Proteomes" id="UP000008152">
    <property type="component" value="Chromosome II"/>
</dbReference>
<dbReference type="GO" id="GO:0005886">
    <property type="term" value="C:plasma membrane"/>
    <property type="evidence" value="ECO:0007669"/>
    <property type="project" value="UniProtKB-SubCell"/>
</dbReference>
<dbReference type="GO" id="GO:0045259">
    <property type="term" value="C:proton-transporting ATP synthase complex"/>
    <property type="evidence" value="ECO:0007669"/>
    <property type="project" value="UniProtKB-KW"/>
</dbReference>
<dbReference type="GO" id="GO:0046933">
    <property type="term" value="F:proton-transporting ATP synthase activity, rotational mechanism"/>
    <property type="evidence" value="ECO:0007669"/>
    <property type="project" value="UniProtKB-UniRule"/>
</dbReference>
<dbReference type="Gene3D" id="1.10.520.20">
    <property type="entry name" value="N-terminal domain of the delta subunit of the F1F0-ATP synthase"/>
    <property type="match status" value="1"/>
</dbReference>
<dbReference type="HAMAP" id="MF_01416">
    <property type="entry name" value="ATP_synth_delta_bact"/>
    <property type="match status" value="1"/>
</dbReference>
<dbReference type="InterPro" id="IPR026015">
    <property type="entry name" value="ATP_synth_OSCP/delta_N_sf"/>
</dbReference>
<dbReference type="InterPro" id="IPR000711">
    <property type="entry name" value="ATPase_OSCP/dsu"/>
</dbReference>
<dbReference type="NCBIfam" id="TIGR01145">
    <property type="entry name" value="ATP_synt_delta"/>
    <property type="match status" value="1"/>
</dbReference>
<dbReference type="NCBIfam" id="NF004402">
    <property type="entry name" value="PRK05758.2-2"/>
    <property type="match status" value="1"/>
</dbReference>
<dbReference type="PANTHER" id="PTHR11910">
    <property type="entry name" value="ATP SYNTHASE DELTA CHAIN"/>
    <property type="match status" value="1"/>
</dbReference>
<dbReference type="Pfam" id="PF00213">
    <property type="entry name" value="OSCP"/>
    <property type="match status" value="1"/>
</dbReference>
<dbReference type="PRINTS" id="PR00125">
    <property type="entry name" value="ATPASEDELTA"/>
</dbReference>
<dbReference type="SUPFAM" id="SSF47928">
    <property type="entry name" value="N-terminal domain of the delta subunit of the F1F0-ATP synthase"/>
    <property type="match status" value="1"/>
</dbReference>
<proteinExistence type="inferred from homology"/>
<reference key="1">
    <citation type="submission" date="2007-08" db="EMBL/GenBank/DDBJ databases">
        <authorList>
            <consortium name="The Vibrio harveyi Genome Sequencing Project"/>
            <person name="Bassler B."/>
            <person name="Clifton S.W."/>
            <person name="Fulton L."/>
            <person name="Delehaunty K."/>
            <person name="Fronick C."/>
            <person name="Harrison M."/>
            <person name="Markivic C."/>
            <person name="Fulton R."/>
            <person name="Tin-Wollam A.-M."/>
            <person name="Shah N."/>
            <person name="Pepin K."/>
            <person name="Nash W."/>
            <person name="Thiruvilangam P."/>
            <person name="Bhonagiri V."/>
            <person name="Waters C."/>
            <person name="Tu K.C."/>
            <person name="Irgon J."/>
            <person name="Wilson R.K."/>
        </authorList>
    </citation>
    <scope>NUCLEOTIDE SEQUENCE [LARGE SCALE GENOMIC DNA]</scope>
    <source>
        <strain>ATCC BAA-1116 / BB120</strain>
    </source>
</reference>